<reference key="1">
    <citation type="journal article" date="2005" name="Genome Res.">
        <title>Comparative and functional genomic analyses of the pathogenicity of phytopathogen Xanthomonas campestris pv. campestris.</title>
        <authorList>
            <person name="Qian W."/>
            <person name="Jia Y."/>
            <person name="Ren S.-X."/>
            <person name="He Y.-Q."/>
            <person name="Feng J.-X."/>
            <person name="Lu L.-F."/>
            <person name="Sun Q."/>
            <person name="Ying G."/>
            <person name="Tang D.-J."/>
            <person name="Tang H."/>
            <person name="Wu W."/>
            <person name="Hao P."/>
            <person name="Wang L."/>
            <person name="Jiang B.-L."/>
            <person name="Zeng S."/>
            <person name="Gu W.-Y."/>
            <person name="Lu G."/>
            <person name="Rong L."/>
            <person name="Tian Y."/>
            <person name="Yao Z."/>
            <person name="Fu G."/>
            <person name="Chen B."/>
            <person name="Fang R."/>
            <person name="Qiang B."/>
            <person name="Chen Z."/>
            <person name="Zhao G.-P."/>
            <person name="Tang J.-L."/>
            <person name="He C."/>
        </authorList>
    </citation>
    <scope>NUCLEOTIDE SEQUENCE [LARGE SCALE GENOMIC DNA]</scope>
    <source>
        <strain>8004</strain>
    </source>
</reference>
<sequence length="635" mass="69712">MSHTPTPAAGSGHAPANGHMALVIGAIGVVFGDIGTSPLYTLKEAFSPHYGLTSDHDTVLGVLSLAFWALMITVTLKYVTIIMRADNEGEGGIMALMALTQRTLKQGSRSAYVVGILGIFGASLFFGDGVITPAISVMGAVEGLEIAAPSLHPFIVPITVVVLLVVFMVQRFGTEKVGKVFGPITCLWFLSLGAIGIWNIVDAPEVLKAFNPWWAIRFFMEHGWHGVFILGAVVLAVTGGEALYADMGHFGARPIRHGWYFFVLPMLLLNYLGQGALVLNHPAALKNPFFEAVPSWALYPMIILATLAAVIASQAVITGAYSVARQAMQLGYIPRMLIKHTSRDTIGQIYVPGINWLLMVMVIALVLIFRSSTNLAVAYGISVSMTMLIDTLLLALVARSLWPRWRNWVLPLCVVFFIIELAFVIANGAKLLQGAWFPLALGIVVFTLMRTWRRGRALLREEIRKDGIRIDSFLPGLMLAPPARVPGMAVFLTADPMVVPHALMHNLKHNKVLHERNIFLNVDTLPIPYAPADKRLQIESIGDEFYRVYVRFGFMETPDVPLALMRSCDQGGIHFDPMDTTFFASRETIVASANRGMPIWRDKLFALMHRNAAPATGFFRIPGNRLVELGAQVEI</sequence>
<dbReference type="EMBL" id="CP000050">
    <property type="protein sequence ID" value="AAY48204.1"/>
    <property type="molecule type" value="Genomic_DNA"/>
</dbReference>
<dbReference type="RefSeq" id="WP_011038140.1">
    <property type="nucleotide sequence ID" value="NZ_CP155948.1"/>
</dbReference>
<dbReference type="SMR" id="Q4UXL9"/>
<dbReference type="KEGG" id="xcb:XC_1134"/>
<dbReference type="HOGENOM" id="CLU_008142_4_2_6"/>
<dbReference type="Proteomes" id="UP000000420">
    <property type="component" value="Chromosome"/>
</dbReference>
<dbReference type="GO" id="GO:0005886">
    <property type="term" value="C:plasma membrane"/>
    <property type="evidence" value="ECO:0007669"/>
    <property type="project" value="UniProtKB-SubCell"/>
</dbReference>
<dbReference type="GO" id="GO:0015079">
    <property type="term" value="F:potassium ion transmembrane transporter activity"/>
    <property type="evidence" value="ECO:0007669"/>
    <property type="project" value="UniProtKB-UniRule"/>
</dbReference>
<dbReference type="GO" id="GO:0015293">
    <property type="term" value="F:symporter activity"/>
    <property type="evidence" value="ECO:0007669"/>
    <property type="project" value="UniProtKB-UniRule"/>
</dbReference>
<dbReference type="HAMAP" id="MF_01522">
    <property type="entry name" value="Kup"/>
    <property type="match status" value="1"/>
</dbReference>
<dbReference type="InterPro" id="IPR003855">
    <property type="entry name" value="K+_transporter"/>
</dbReference>
<dbReference type="InterPro" id="IPR053952">
    <property type="entry name" value="K_trans_C"/>
</dbReference>
<dbReference type="InterPro" id="IPR053951">
    <property type="entry name" value="K_trans_N"/>
</dbReference>
<dbReference type="InterPro" id="IPR023051">
    <property type="entry name" value="Kup"/>
</dbReference>
<dbReference type="PANTHER" id="PTHR30540:SF79">
    <property type="entry name" value="LOW AFFINITY POTASSIUM TRANSPORT SYSTEM PROTEIN KUP"/>
    <property type="match status" value="1"/>
</dbReference>
<dbReference type="PANTHER" id="PTHR30540">
    <property type="entry name" value="OSMOTIC STRESS POTASSIUM TRANSPORTER"/>
    <property type="match status" value="1"/>
</dbReference>
<dbReference type="Pfam" id="PF02705">
    <property type="entry name" value="K_trans"/>
    <property type="match status" value="1"/>
</dbReference>
<dbReference type="Pfam" id="PF22776">
    <property type="entry name" value="K_trans_C"/>
    <property type="match status" value="1"/>
</dbReference>
<comment type="function">
    <text evidence="1">Transport of potassium into the cell. Likely operates as a K(+):H(+) symporter.</text>
</comment>
<comment type="catalytic activity">
    <reaction evidence="1">
        <text>K(+)(in) + H(+)(in) = K(+)(out) + H(+)(out)</text>
        <dbReference type="Rhea" id="RHEA:28490"/>
        <dbReference type="ChEBI" id="CHEBI:15378"/>
        <dbReference type="ChEBI" id="CHEBI:29103"/>
    </reaction>
    <physiologicalReaction direction="right-to-left" evidence="1">
        <dbReference type="Rhea" id="RHEA:28492"/>
    </physiologicalReaction>
</comment>
<comment type="subcellular location">
    <subcellularLocation>
        <location evidence="1">Cell inner membrane</location>
        <topology evidence="1">Multi-pass membrane protein</topology>
    </subcellularLocation>
</comment>
<comment type="similarity">
    <text evidence="1">Belongs to the HAK/KUP transporter (TC 2.A.72) family.</text>
</comment>
<evidence type="ECO:0000255" key="1">
    <source>
        <dbReference type="HAMAP-Rule" id="MF_01522"/>
    </source>
</evidence>
<organism>
    <name type="scientific">Xanthomonas campestris pv. campestris (strain 8004)</name>
    <dbReference type="NCBI Taxonomy" id="314565"/>
    <lineage>
        <taxon>Bacteria</taxon>
        <taxon>Pseudomonadati</taxon>
        <taxon>Pseudomonadota</taxon>
        <taxon>Gammaproteobacteria</taxon>
        <taxon>Lysobacterales</taxon>
        <taxon>Lysobacteraceae</taxon>
        <taxon>Xanthomonas</taxon>
    </lineage>
</organism>
<gene>
    <name evidence="1" type="primary">kup</name>
    <name type="ordered locus">XC_1134</name>
</gene>
<protein>
    <recommendedName>
        <fullName evidence="1">Probable potassium transport system protein Kup</fullName>
    </recommendedName>
</protein>
<proteinExistence type="inferred from homology"/>
<keyword id="KW-0997">Cell inner membrane</keyword>
<keyword id="KW-1003">Cell membrane</keyword>
<keyword id="KW-0406">Ion transport</keyword>
<keyword id="KW-0472">Membrane</keyword>
<keyword id="KW-0630">Potassium</keyword>
<keyword id="KW-0633">Potassium transport</keyword>
<keyword id="KW-0769">Symport</keyword>
<keyword id="KW-0812">Transmembrane</keyword>
<keyword id="KW-1133">Transmembrane helix</keyword>
<keyword id="KW-0813">Transport</keyword>
<feature type="chain" id="PRO_0000279842" description="Probable potassium transport system protein Kup">
    <location>
        <begin position="1"/>
        <end position="635"/>
    </location>
</feature>
<feature type="transmembrane region" description="Helical" evidence="1">
    <location>
        <begin position="20"/>
        <end position="40"/>
    </location>
</feature>
<feature type="transmembrane region" description="Helical" evidence="1">
    <location>
        <begin position="62"/>
        <end position="82"/>
    </location>
</feature>
<feature type="transmembrane region" description="Helical" evidence="1">
    <location>
        <begin position="111"/>
        <end position="131"/>
    </location>
</feature>
<feature type="transmembrane region" description="Helical" evidence="1">
    <location>
        <begin position="149"/>
        <end position="169"/>
    </location>
</feature>
<feature type="transmembrane region" description="Helical" evidence="1">
    <location>
        <begin position="180"/>
        <end position="200"/>
    </location>
</feature>
<feature type="transmembrane region" description="Helical" evidence="1">
    <location>
        <begin position="223"/>
        <end position="243"/>
    </location>
</feature>
<feature type="transmembrane region" description="Helical" evidence="1">
    <location>
        <begin position="259"/>
        <end position="279"/>
    </location>
</feature>
<feature type="transmembrane region" description="Helical" evidence="1">
    <location>
        <begin position="292"/>
        <end position="312"/>
    </location>
</feature>
<feature type="transmembrane region" description="Helical" evidence="1">
    <location>
        <begin position="349"/>
        <end position="369"/>
    </location>
</feature>
<feature type="transmembrane region" description="Helical" evidence="1">
    <location>
        <begin position="377"/>
        <end position="397"/>
    </location>
</feature>
<feature type="transmembrane region" description="Helical" evidence="1">
    <location>
        <begin position="408"/>
        <end position="428"/>
    </location>
</feature>
<feature type="transmembrane region" description="Helical" evidence="1">
    <location>
        <begin position="429"/>
        <end position="449"/>
    </location>
</feature>
<name>KUP_XANC8</name>
<accession>Q4UXL9</accession>